<proteinExistence type="evidence at transcript level"/>
<dbReference type="EMBL" id="AK077130">
    <property type="protein sequence ID" value="BAC36633.1"/>
    <property type="molecule type" value="mRNA"/>
</dbReference>
<dbReference type="EMBL" id="BC060957">
    <property type="protein sequence ID" value="AAH60957.1"/>
    <property type="molecule type" value="mRNA"/>
</dbReference>
<dbReference type="CCDS" id="CCDS22563.1"/>
<dbReference type="RefSeq" id="NP_766502.1">
    <property type="nucleotide sequence ID" value="NM_172914.2"/>
</dbReference>
<dbReference type="SMR" id="Q8C5T8"/>
<dbReference type="FunCoup" id="Q8C5T8">
    <property type="interactions" value="104"/>
</dbReference>
<dbReference type="STRING" id="10090.ENSMUSP00000049497"/>
<dbReference type="iPTMnet" id="Q8C5T8"/>
<dbReference type="PhosphoSitePlus" id="Q8C5T8"/>
<dbReference type="PaxDb" id="10090-ENSMUSP00000049497"/>
<dbReference type="ProteomicsDB" id="265575"/>
<dbReference type="Antibodypedia" id="54998">
    <property type="antibodies" value="83 antibodies from 14 providers"/>
</dbReference>
<dbReference type="DNASU" id="244608"/>
<dbReference type="Ensembl" id="ENSMUST00000041569.5">
    <property type="protein sequence ID" value="ENSMUSP00000049497.4"/>
    <property type="gene ID" value="ENSMUSG00000036598.5"/>
</dbReference>
<dbReference type="GeneID" id="244608"/>
<dbReference type="KEGG" id="mmu:244608"/>
<dbReference type="UCSC" id="uc009myn.1">
    <property type="organism name" value="mouse"/>
</dbReference>
<dbReference type="AGR" id="MGI:3606076"/>
<dbReference type="CTD" id="244608"/>
<dbReference type="MGI" id="MGI:3606076">
    <property type="gene designation" value="Ccdc113"/>
</dbReference>
<dbReference type="VEuPathDB" id="HostDB:ENSMUSG00000036598"/>
<dbReference type="eggNOG" id="ENOG502QU7J">
    <property type="taxonomic scope" value="Eukaryota"/>
</dbReference>
<dbReference type="GeneTree" id="ENSGT00940000154521"/>
<dbReference type="HOGENOM" id="CLU_046867_1_0_1"/>
<dbReference type="InParanoid" id="Q8C5T8"/>
<dbReference type="OMA" id="TCQQHRA"/>
<dbReference type="OrthoDB" id="10259713at2759"/>
<dbReference type="PhylomeDB" id="Q8C5T8"/>
<dbReference type="TreeFam" id="TF328830"/>
<dbReference type="BioGRID-ORCS" id="244608">
    <property type="hits" value="1 hit in 77 CRISPR screens"/>
</dbReference>
<dbReference type="PRO" id="PR:Q8C5T8"/>
<dbReference type="Proteomes" id="UP000000589">
    <property type="component" value="Chromosome 8"/>
</dbReference>
<dbReference type="RNAct" id="Q8C5T8">
    <property type="molecule type" value="protein"/>
</dbReference>
<dbReference type="Bgee" id="ENSMUSG00000036598">
    <property type="expression patterns" value="Expressed in ventricular system choroidal fissure and 54 other cell types or tissues"/>
</dbReference>
<dbReference type="GO" id="GO:0034451">
    <property type="term" value="C:centriolar satellite"/>
    <property type="evidence" value="ECO:0000250"/>
    <property type="project" value="UniProtKB"/>
</dbReference>
<dbReference type="GO" id="GO:0036064">
    <property type="term" value="C:ciliary basal body"/>
    <property type="evidence" value="ECO:0007669"/>
    <property type="project" value="Ensembl"/>
</dbReference>
<dbReference type="GO" id="GO:0005737">
    <property type="term" value="C:cytoplasm"/>
    <property type="evidence" value="ECO:0007669"/>
    <property type="project" value="UniProtKB-KW"/>
</dbReference>
<dbReference type="GO" id="GO:0032991">
    <property type="term" value="C:protein-containing complex"/>
    <property type="evidence" value="ECO:0000250"/>
    <property type="project" value="UniProtKB"/>
</dbReference>
<dbReference type="GO" id="GO:0060271">
    <property type="term" value="P:cilium assembly"/>
    <property type="evidence" value="ECO:0000315"/>
    <property type="project" value="MGI"/>
</dbReference>
<dbReference type="InterPro" id="IPR051885">
    <property type="entry name" value="CC_domain-Cilium_Assoc"/>
</dbReference>
<dbReference type="InterPro" id="IPR025254">
    <property type="entry name" value="CCDC113/CCDC96_CC"/>
</dbReference>
<dbReference type="PANTHER" id="PTHR15654:SF2">
    <property type="entry name" value="COILED-COIL DOMAIN-CONTAINING PROTEIN 113"/>
    <property type="match status" value="1"/>
</dbReference>
<dbReference type="PANTHER" id="PTHR15654">
    <property type="entry name" value="COILED-COIL DOMAIN-CONTAINING PROTEIN 113-RELATED"/>
    <property type="match status" value="1"/>
</dbReference>
<dbReference type="Pfam" id="PF13870">
    <property type="entry name" value="CCDC113_CCDC96_CC"/>
    <property type="match status" value="1"/>
</dbReference>
<reference key="1">
    <citation type="journal article" date="2005" name="Science">
        <title>The transcriptional landscape of the mammalian genome.</title>
        <authorList>
            <person name="Carninci P."/>
            <person name="Kasukawa T."/>
            <person name="Katayama S."/>
            <person name="Gough J."/>
            <person name="Frith M.C."/>
            <person name="Maeda N."/>
            <person name="Oyama R."/>
            <person name="Ravasi T."/>
            <person name="Lenhard B."/>
            <person name="Wells C."/>
            <person name="Kodzius R."/>
            <person name="Shimokawa K."/>
            <person name="Bajic V.B."/>
            <person name="Brenner S.E."/>
            <person name="Batalov S."/>
            <person name="Forrest A.R."/>
            <person name="Zavolan M."/>
            <person name="Davis M.J."/>
            <person name="Wilming L.G."/>
            <person name="Aidinis V."/>
            <person name="Allen J.E."/>
            <person name="Ambesi-Impiombato A."/>
            <person name="Apweiler R."/>
            <person name="Aturaliya R.N."/>
            <person name="Bailey T.L."/>
            <person name="Bansal M."/>
            <person name="Baxter L."/>
            <person name="Beisel K.W."/>
            <person name="Bersano T."/>
            <person name="Bono H."/>
            <person name="Chalk A.M."/>
            <person name="Chiu K.P."/>
            <person name="Choudhary V."/>
            <person name="Christoffels A."/>
            <person name="Clutterbuck D.R."/>
            <person name="Crowe M.L."/>
            <person name="Dalla E."/>
            <person name="Dalrymple B.P."/>
            <person name="de Bono B."/>
            <person name="Della Gatta G."/>
            <person name="di Bernardo D."/>
            <person name="Down T."/>
            <person name="Engstrom P."/>
            <person name="Fagiolini M."/>
            <person name="Faulkner G."/>
            <person name="Fletcher C.F."/>
            <person name="Fukushima T."/>
            <person name="Furuno M."/>
            <person name="Futaki S."/>
            <person name="Gariboldi M."/>
            <person name="Georgii-Hemming P."/>
            <person name="Gingeras T.R."/>
            <person name="Gojobori T."/>
            <person name="Green R.E."/>
            <person name="Gustincich S."/>
            <person name="Harbers M."/>
            <person name="Hayashi Y."/>
            <person name="Hensch T.K."/>
            <person name="Hirokawa N."/>
            <person name="Hill D."/>
            <person name="Huminiecki L."/>
            <person name="Iacono M."/>
            <person name="Ikeo K."/>
            <person name="Iwama A."/>
            <person name="Ishikawa T."/>
            <person name="Jakt M."/>
            <person name="Kanapin A."/>
            <person name="Katoh M."/>
            <person name="Kawasawa Y."/>
            <person name="Kelso J."/>
            <person name="Kitamura H."/>
            <person name="Kitano H."/>
            <person name="Kollias G."/>
            <person name="Krishnan S.P."/>
            <person name="Kruger A."/>
            <person name="Kummerfeld S.K."/>
            <person name="Kurochkin I.V."/>
            <person name="Lareau L.F."/>
            <person name="Lazarevic D."/>
            <person name="Lipovich L."/>
            <person name="Liu J."/>
            <person name="Liuni S."/>
            <person name="McWilliam S."/>
            <person name="Madan Babu M."/>
            <person name="Madera M."/>
            <person name="Marchionni L."/>
            <person name="Matsuda H."/>
            <person name="Matsuzawa S."/>
            <person name="Miki H."/>
            <person name="Mignone F."/>
            <person name="Miyake S."/>
            <person name="Morris K."/>
            <person name="Mottagui-Tabar S."/>
            <person name="Mulder N."/>
            <person name="Nakano N."/>
            <person name="Nakauchi H."/>
            <person name="Ng P."/>
            <person name="Nilsson R."/>
            <person name="Nishiguchi S."/>
            <person name="Nishikawa S."/>
            <person name="Nori F."/>
            <person name="Ohara O."/>
            <person name="Okazaki Y."/>
            <person name="Orlando V."/>
            <person name="Pang K.C."/>
            <person name="Pavan W.J."/>
            <person name="Pavesi G."/>
            <person name="Pesole G."/>
            <person name="Petrovsky N."/>
            <person name="Piazza S."/>
            <person name="Reed J."/>
            <person name="Reid J.F."/>
            <person name="Ring B.Z."/>
            <person name="Ringwald M."/>
            <person name="Rost B."/>
            <person name="Ruan Y."/>
            <person name="Salzberg S.L."/>
            <person name="Sandelin A."/>
            <person name="Schneider C."/>
            <person name="Schoenbach C."/>
            <person name="Sekiguchi K."/>
            <person name="Semple C.A."/>
            <person name="Seno S."/>
            <person name="Sessa L."/>
            <person name="Sheng Y."/>
            <person name="Shibata Y."/>
            <person name="Shimada H."/>
            <person name="Shimada K."/>
            <person name="Silva D."/>
            <person name="Sinclair B."/>
            <person name="Sperling S."/>
            <person name="Stupka E."/>
            <person name="Sugiura K."/>
            <person name="Sultana R."/>
            <person name="Takenaka Y."/>
            <person name="Taki K."/>
            <person name="Tammoja K."/>
            <person name="Tan S.L."/>
            <person name="Tang S."/>
            <person name="Taylor M.S."/>
            <person name="Tegner J."/>
            <person name="Teichmann S.A."/>
            <person name="Ueda H.R."/>
            <person name="van Nimwegen E."/>
            <person name="Verardo R."/>
            <person name="Wei C.L."/>
            <person name="Yagi K."/>
            <person name="Yamanishi H."/>
            <person name="Zabarovsky E."/>
            <person name="Zhu S."/>
            <person name="Zimmer A."/>
            <person name="Hide W."/>
            <person name="Bult C."/>
            <person name="Grimmond S.M."/>
            <person name="Teasdale R.D."/>
            <person name="Liu E.T."/>
            <person name="Brusic V."/>
            <person name="Quackenbush J."/>
            <person name="Wahlestedt C."/>
            <person name="Mattick J.S."/>
            <person name="Hume D.A."/>
            <person name="Kai C."/>
            <person name="Sasaki D."/>
            <person name="Tomaru Y."/>
            <person name="Fukuda S."/>
            <person name="Kanamori-Katayama M."/>
            <person name="Suzuki M."/>
            <person name="Aoki J."/>
            <person name="Arakawa T."/>
            <person name="Iida J."/>
            <person name="Imamura K."/>
            <person name="Itoh M."/>
            <person name="Kato T."/>
            <person name="Kawaji H."/>
            <person name="Kawagashira N."/>
            <person name="Kawashima T."/>
            <person name="Kojima M."/>
            <person name="Kondo S."/>
            <person name="Konno H."/>
            <person name="Nakano K."/>
            <person name="Ninomiya N."/>
            <person name="Nishio T."/>
            <person name="Okada M."/>
            <person name="Plessy C."/>
            <person name="Shibata K."/>
            <person name="Shiraki T."/>
            <person name="Suzuki S."/>
            <person name="Tagami M."/>
            <person name="Waki K."/>
            <person name="Watahiki A."/>
            <person name="Okamura-Oho Y."/>
            <person name="Suzuki H."/>
            <person name="Kawai J."/>
            <person name="Hayashizaki Y."/>
        </authorList>
    </citation>
    <scope>NUCLEOTIDE SEQUENCE [LARGE SCALE MRNA]</scope>
    <source>
        <strain>C57BL/6J</strain>
        <tissue>Testis</tissue>
    </source>
</reference>
<reference key="2">
    <citation type="journal article" date="2004" name="Genome Res.">
        <title>The status, quality, and expansion of the NIH full-length cDNA project: the Mammalian Gene Collection (MGC).</title>
        <authorList>
            <consortium name="The MGC Project Team"/>
        </authorList>
    </citation>
    <scope>NUCLEOTIDE SEQUENCE [LARGE SCALE MRNA]</scope>
    <source>
        <tissue>Testis</tissue>
    </source>
</reference>
<name>CF263_MOUSE</name>
<accession>Q8C5T8</accession>
<evidence type="ECO:0000250" key="1">
    <source>
        <dbReference type="UniProtKB" id="Q22KK0"/>
    </source>
</evidence>
<evidence type="ECO:0000250" key="2">
    <source>
        <dbReference type="UniProtKB" id="Q9H0I3"/>
    </source>
</evidence>
<evidence type="ECO:0000255" key="3"/>
<evidence type="ECO:0000305" key="4"/>
<comment type="function">
    <text evidence="1 2">Component of centriolar satellites contributing to primary cilium formation (By similarity). In complex with CFAP263, acts as a regulator of ciliary beating that connects radial spoke 3 (RS3) to the inner dynein arm (IDA) and the nexin-dynein regulatory complex (N-DRC). The complex is positioned parallel to N-DRC and forms a connection between the arch at the base of RS3, the IDA tail and N-DRC (By similarity).</text>
</comment>
<comment type="subunit">
    <text evidence="1 2">Forms a complex with CFAP184; the interaction is required for functional activity in cilia (By similarity). Interacts with HAP1 and PCM1 (By similarity).</text>
</comment>
<comment type="subcellular location">
    <subcellularLocation>
        <location evidence="2">Cytoplasm</location>
        <location evidence="2">Cytoskeleton</location>
        <location evidence="2">Microtubule organizing center</location>
        <location evidence="2">Centrosome</location>
        <location evidence="2">Centriolar satellite</location>
    </subcellularLocation>
    <subcellularLocation>
        <location evidence="1">Cell projection</location>
        <location evidence="1">Cilium</location>
    </subcellularLocation>
    <text evidence="1 2">Colocalized with HAP1 at centriolar satellites. Centriolar satellite localization requires PCM1 (By similarity). Localizes at cilium but not at the ciliary tips (By similarity).</text>
</comment>
<comment type="similarity">
    <text evidence="4">Belongs to the CFAP263 family.</text>
</comment>
<feature type="chain" id="PRO_0000279400" description="Cilia- and flagella-associated protein 263">
    <location>
        <begin position="1"/>
        <end position="377"/>
    </location>
</feature>
<feature type="coiled-coil region" evidence="3">
    <location>
        <begin position="95"/>
        <end position="139"/>
    </location>
</feature>
<feature type="coiled-coil region" evidence="3">
    <location>
        <begin position="169"/>
        <end position="355"/>
    </location>
</feature>
<organism>
    <name type="scientific">Mus musculus</name>
    <name type="common">Mouse</name>
    <dbReference type="NCBI Taxonomy" id="10090"/>
    <lineage>
        <taxon>Eukaryota</taxon>
        <taxon>Metazoa</taxon>
        <taxon>Chordata</taxon>
        <taxon>Craniata</taxon>
        <taxon>Vertebrata</taxon>
        <taxon>Euteleostomi</taxon>
        <taxon>Mammalia</taxon>
        <taxon>Eutheria</taxon>
        <taxon>Euarchontoglires</taxon>
        <taxon>Glires</taxon>
        <taxon>Rodentia</taxon>
        <taxon>Myomorpha</taxon>
        <taxon>Muroidea</taxon>
        <taxon>Muridae</taxon>
        <taxon>Murinae</taxon>
        <taxon>Mus</taxon>
        <taxon>Mus</taxon>
    </lineage>
</organism>
<sequence length="377" mass="44215">MSEEDSDSVITDSQAEEEGELPVIQLCGLVEELSYGNSALKTETEMFEKYYSRLEPRDHRMTRLSDIKITAAEFSQLRSRRKSKARGGLDRTLGLTVEQKLELVQKELEDTRDEIRHMRANAERDLQHHEAIIEEADIRWNEVQKAVHEFEKDILKTISKKKGSILATQKVMKYIEDMNRRRDNIKDKLCLKNVSLKVQRKKMLSQLRQKEEVGEALHDVDFQQLKIENAQFLETIEARNKELIQLKLASGNTLQVLNTYKNKLHRAMEIYVNLDKEILLRNELLGKIEKETIQAEEDRAKAHILNDKLRKQLAEFRAPQVMMYVKEKILNGELEKTIKMWERKVEIAEMSLKGYRKAWNKMKTSDEQLQIIRPPGK</sequence>
<keyword id="KW-0966">Cell projection</keyword>
<keyword id="KW-0970">Cilium biogenesis/degradation</keyword>
<keyword id="KW-0175">Coiled coil</keyword>
<keyword id="KW-0963">Cytoplasm</keyword>
<keyword id="KW-0206">Cytoskeleton</keyword>
<keyword id="KW-1185">Reference proteome</keyword>
<gene>
    <name type="primary">Cfap263</name>
    <name type="synonym">Ccdc113</name>
</gene>
<protein>
    <recommendedName>
        <fullName>Cilia- and flagella-associated protein 263</fullName>
    </recommendedName>
</protein>